<feature type="chain" id="PRO_0000397880" description="Leptin receptor gene-related protein">
    <location>
        <begin position="1"/>
        <end position="131"/>
    </location>
</feature>
<feature type="transmembrane region" description="Helical" evidence="2">
    <location>
        <begin position="7"/>
        <end position="27"/>
    </location>
</feature>
<feature type="transmembrane region" description="Helical" evidence="2">
    <location>
        <begin position="32"/>
        <end position="52"/>
    </location>
</feature>
<feature type="transmembrane region" description="Helical" evidence="2">
    <location>
        <begin position="69"/>
        <end position="89"/>
    </location>
</feature>
<feature type="transmembrane region" description="Helical" evidence="2">
    <location>
        <begin position="100"/>
        <end position="120"/>
    </location>
</feature>
<evidence type="ECO:0000250" key="1"/>
<evidence type="ECO:0000255" key="2"/>
<evidence type="ECO:0000305" key="3"/>
<sequence>MAGIKALVGLSFSGAIGLTFLMLGCALEYYGVYWPMFVLIFYFICPIPHFIARRVSDDSDAASSACRELAYFFTTGIVVSAFGFPIILARVEAIKWGACGLVLAGNAVIFLTILGFFLVFGRGDDFSWEQW</sequence>
<protein>
    <recommendedName>
        <fullName>Leptin receptor gene-related protein</fullName>
    </recommendedName>
    <alternativeName>
        <fullName>Endospanin-1</fullName>
    </alternativeName>
    <alternativeName>
        <fullName>OB-R gene-related protein</fullName>
        <shortName>OB-RGRP</shortName>
    </alternativeName>
</protein>
<proteinExistence type="evidence at transcript level"/>
<comment type="function">
    <text evidence="1">Involved in protein trafficking. May be involved in the down-regulation of membrane protein levels (By similarity).</text>
</comment>
<comment type="subcellular location">
    <subcellularLocation>
        <location evidence="1">Golgi apparatus membrane</location>
        <topology evidence="1">Multi-pass membrane protein</topology>
    </subcellularLocation>
    <subcellularLocation>
        <location evidence="1">Endosome membrane</location>
    </subcellularLocation>
</comment>
<comment type="similarity">
    <text evidence="3">Belongs to the OB-RGRP/VPS55 family.</text>
</comment>
<dbReference type="EMBL" id="AJ720495">
    <property type="protein sequence ID" value="CAG32154.1"/>
    <property type="molecule type" value="mRNA"/>
</dbReference>
<dbReference type="RefSeq" id="NP_001007959.1">
    <property type="nucleotide sequence ID" value="NM_001007958.2"/>
</dbReference>
<dbReference type="FunCoup" id="Q5ZJD9">
    <property type="interactions" value="1424"/>
</dbReference>
<dbReference type="STRING" id="9031.ENSGALP00000017973"/>
<dbReference type="PaxDb" id="9031-ENSGALP00000017973"/>
<dbReference type="Ensembl" id="ENSGALT00010058912.1">
    <property type="protein sequence ID" value="ENSGALP00010035877.1"/>
    <property type="gene ID" value="ENSGALG00010024151.1"/>
</dbReference>
<dbReference type="GeneID" id="424699"/>
<dbReference type="KEGG" id="gga:424699"/>
<dbReference type="CTD" id="54741"/>
<dbReference type="VEuPathDB" id="HostDB:geneid_424699"/>
<dbReference type="eggNOG" id="KOG2174">
    <property type="taxonomic scope" value="Eukaryota"/>
</dbReference>
<dbReference type="GeneTree" id="ENSGT00390000006503"/>
<dbReference type="HOGENOM" id="CLU_134810_2_2_1"/>
<dbReference type="InParanoid" id="Q5ZJD9"/>
<dbReference type="OMA" id="RSHVDMT"/>
<dbReference type="OrthoDB" id="14246at2759"/>
<dbReference type="PhylomeDB" id="Q5ZJD9"/>
<dbReference type="TreeFam" id="TF313689"/>
<dbReference type="PRO" id="PR:Q5ZJD9"/>
<dbReference type="Proteomes" id="UP000000539">
    <property type="component" value="Chromosome 8"/>
</dbReference>
<dbReference type="Bgee" id="ENSGALG00000011047">
    <property type="expression patterns" value="Expressed in colon and 13 other cell types or tissues"/>
</dbReference>
<dbReference type="GO" id="GO:0005768">
    <property type="term" value="C:endosome"/>
    <property type="evidence" value="ECO:0000318"/>
    <property type="project" value="GO_Central"/>
</dbReference>
<dbReference type="GO" id="GO:0010008">
    <property type="term" value="C:endosome membrane"/>
    <property type="evidence" value="ECO:0007669"/>
    <property type="project" value="UniProtKB-SubCell"/>
</dbReference>
<dbReference type="GO" id="GO:0000139">
    <property type="term" value="C:Golgi membrane"/>
    <property type="evidence" value="ECO:0007669"/>
    <property type="project" value="UniProtKB-SubCell"/>
</dbReference>
<dbReference type="GO" id="GO:0032511">
    <property type="term" value="P:late endosome to vacuole transport via multivesicular body sorting pathway"/>
    <property type="evidence" value="ECO:0000318"/>
    <property type="project" value="GO_Central"/>
</dbReference>
<dbReference type="GO" id="GO:0060400">
    <property type="term" value="P:negative regulation of growth hormone receptor signaling pathway"/>
    <property type="evidence" value="ECO:0000318"/>
    <property type="project" value="GO_Central"/>
</dbReference>
<dbReference type="InterPro" id="IPR007262">
    <property type="entry name" value="Vps55/LEPROT"/>
</dbReference>
<dbReference type="PANTHER" id="PTHR12050:SF3">
    <property type="entry name" value="LEPTIN RECEPTOR GENE-RELATED PROTEIN"/>
    <property type="match status" value="1"/>
</dbReference>
<dbReference type="PANTHER" id="PTHR12050">
    <property type="entry name" value="LEPTIN RECEPTOR-RELATED"/>
    <property type="match status" value="1"/>
</dbReference>
<dbReference type="Pfam" id="PF04133">
    <property type="entry name" value="Vps55"/>
    <property type="match status" value="1"/>
</dbReference>
<reference key="1">
    <citation type="journal article" date="2005" name="Genome Biol.">
        <title>Full-length cDNAs from chicken bursal lymphocytes to facilitate gene function analysis.</title>
        <authorList>
            <person name="Caldwell R.B."/>
            <person name="Kierzek A.M."/>
            <person name="Arakawa H."/>
            <person name="Bezzubov Y."/>
            <person name="Zaim J."/>
            <person name="Fiedler P."/>
            <person name="Kutter S."/>
            <person name="Blagodatski A."/>
            <person name="Kostovska D."/>
            <person name="Koter M."/>
            <person name="Plachy J."/>
            <person name="Carninci P."/>
            <person name="Hayashizaki Y."/>
            <person name="Buerstedde J.-M."/>
        </authorList>
    </citation>
    <scope>NUCLEOTIDE SEQUENCE [LARGE SCALE MRNA]</scope>
    <source>
        <strain>CB</strain>
        <tissue>Bursa of Fabricius</tissue>
    </source>
</reference>
<organism>
    <name type="scientific">Gallus gallus</name>
    <name type="common">Chicken</name>
    <dbReference type="NCBI Taxonomy" id="9031"/>
    <lineage>
        <taxon>Eukaryota</taxon>
        <taxon>Metazoa</taxon>
        <taxon>Chordata</taxon>
        <taxon>Craniata</taxon>
        <taxon>Vertebrata</taxon>
        <taxon>Euteleostomi</taxon>
        <taxon>Archelosauria</taxon>
        <taxon>Archosauria</taxon>
        <taxon>Dinosauria</taxon>
        <taxon>Saurischia</taxon>
        <taxon>Theropoda</taxon>
        <taxon>Coelurosauria</taxon>
        <taxon>Aves</taxon>
        <taxon>Neognathae</taxon>
        <taxon>Galloanserae</taxon>
        <taxon>Galliformes</taxon>
        <taxon>Phasianidae</taxon>
        <taxon>Phasianinae</taxon>
        <taxon>Gallus</taxon>
    </lineage>
</organism>
<keyword id="KW-0967">Endosome</keyword>
<keyword id="KW-0333">Golgi apparatus</keyword>
<keyword id="KW-0472">Membrane</keyword>
<keyword id="KW-1185">Reference proteome</keyword>
<keyword id="KW-0812">Transmembrane</keyword>
<keyword id="KW-1133">Transmembrane helix</keyword>
<gene>
    <name type="primary">LEPROT</name>
    <name type="synonym">LEPR-GRP</name>
    <name type="ORF">RCJMB04_19b9</name>
</gene>
<accession>Q5ZJD9</accession>
<name>OBRG_CHICK</name>